<feature type="chain" id="PRO_1000135923" description="2,3-bisphosphoglycerate-dependent phosphoglycerate mutase">
    <location>
        <begin position="1"/>
        <end position="248"/>
    </location>
</feature>
<feature type="active site" description="Tele-phosphohistidine intermediate" evidence="1">
    <location>
        <position position="9"/>
    </location>
</feature>
<feature type="active site" description="Proton donor/acceptor" evidence="1">
    <location>
        <position position="87"/>
    </location>
</feature>
<feature type="binding site" evidence="1">
    <location>
        <begin position="8"/>
        <end position="15"/>
    </location>
    <ligand>
        <name>substrate</name>
    </ligand>
</feature>
<feature type="binding site" evidence="1">
    <location>
        <begin position="21"/>
        <end position="22"/>
    </location>
    <ligand>
        <name>substrate</name>
    </ligand>
</feature>
<feature type="binding site" evidence="1">
    <location>
        <position position="60"/>
    </location>
    <ligand>
        <name>substrate</name>
    </ligand>
</feature>
<feature type="binding site" evidence="1">
    <location>
        <begin position="87"/>
        <end position="90"/>
    </location>
    <ligand>
        <name>substrate</name>
    </ligand>
</feature>
<feature type="binding site" evidence="1">
    <location>
        <position position="98"/>
    </location>
    <ligand>
        <name>substrate</name>
    </ligand>
</feature>
<feature type="binding site" evidence="1">
    <location>
        <begin position="114"/>
        <end position="115"/>
    </location>
    <ligand>
        <name>substrate</name>
    </ligand>
</feature>
<feature type="binding site" evidence="1">
    <location>
        <begin position="183"/>
        <end position="184"/>
    </location>
    <ligand>
        <name>substrate</name>
    </ligand>
</feature>
<feature type="site" description="Transition state stabilizer" evidence="1">
    <location>
        <position position="182"/>
    </location>
</feature>
<reference key="1">
    <citation type="submission" date="2004-12" db="EMBL/GenBank/DDBJ databases">
        <title>The genome sequence of Borrelia hermsii and Borrelia turicatae: comparative analysis of two agents of endemic N. America relapsing fever.</title>
        <authorList>
            <person name="Porcella S.F."/>
            <person name="Raffel S.J."/>
            <person name="Schrumpf M.E."/>
            <person name="Montgomery B."/>
            <person name="Smith T."/>
            <person name="Schwan T.G."/>
        </authorList>
    </citation>
    <scope>NUCLEOTIDE SEQUENCE [LARGE SCALE GENOMIC DNA]</scope>
    <source>
        <strain>HS1 / DAH</strain>
    </source>
</reference>
<gene>
    <name evidence="1" type="primary">gpmA</name>
    <name type="ordered locus">BH0658</name>
</gene>
<comment type="function">
    <text evidence="1">Catalyzes the interconversion of 2-phosphoglycerate and 3-phosphoglycerate.</text>
</comment>
<comment type="catalytic activity">
    <reaction evidence="1">
        <text>(2R)-2-phosphoglycerate = (2R)-3-phosphoglycerate</text>
        <dbReference type="Rhea" id="RHEA:15901"/>
        <dbReference type="ChEBI" id="CHEBI:58272"/>
        <dbReference type="ChEBI" id="CHEBI:58289"/>
        <dbReference type="EC" id="5.4.2.11"/>
    </reaction>
</comment>
<comment type="pathway">
    <text evidence="1">Carbohydrate degradation; glycolysis; pyruvate from D-glyceraldehyde 3-phosphate: step 3/5.</text>
</comment>
<comment type="similarity">
    <text evidence="1">Belongs to the phosphoglycerate mutase family. BPG-dependent PGAM subfamily.</text>
</comment>
<keyword id="KW-0312">Gluconeogenesis</keyword>
<keyword id="KW-0324">Glycolysis</keyword>
<keyword id="KW-0413">Isomerase</keyword>
<proteinExistence type="inferred from homology"/>
<dbReference type="EC" id="5.4.2.11" evidence="1"/>
<dbReference type="EMBL" id="CP000048">
    <property type="protein sequence ID" value="AAX17157.1"/>
    <property type="molecule type" value="Genomic_DNA"/>
</dbReference>
<dbReference type="RefSeq" id="WP_012422408.1">
    <property type="nucleotide sequence ID" value="NZ_CP073136.1"/>
</dbReference>
<dbReference type="SMR" id="B2S101"/>
<dbReference type="GeneID" id="71843482"/>
<dbReference type="KEGG" id="bhr:BH0658"/>
<dbReference type="HOGENOM" id="CLU_033323_1_1_12"/>
<dbReference type="UniPathway" id="UPA00109">
    <property type="reaction ID" value="UER00186"/>
</dbReference>
<dbReference type="Proteomes" id="UP000008834">
    <property type="component" value="Chromosome"/>
</dbReference>
<dbReference type="GO" id="GO:0004619">
    <property type="term" value="F:phosphoglycerate mutase activity"/>
    <property type="evidence" value="ECO:0007669"/>
    <property type="project" value="UniProtKB-EC"/>
</dbReference>
<dbReference type="GO" id="GO:0006094">
    <property type="term" value="P:gluconeogenesis"/>
    <property type="evidence" value="ECO:0007669"/>
    <property type="project" value="UniProtKB-UniRule"/>
</dbReference>
<dbReference type="GO" id="GO:0006096">
    <property type="term" value="P:glycolytic process"/>
    <property type="evidence" value="ECO:0007669"/>
    <property type="project" value="UniProtKB-UniRule"/>
</dbReference>
<dbReference type="CDD" id="cd07067">
    <property type="entry name" value="HP_PGM_like"/>
    <property type="match status" value="1"/>
</dbReference>
<dbReference type="FunFam" id="3.40.50.1240:FF:000003">
    <property type="entry name" value="2,3-bisphosphoglycerate-dependent phosphoglycerate mutase"/>
    <property type="match status" value="1"/>
</dbReference>
<dbReference type="Gene3D" id="3.40.50.1240">
    <property type="entry name" value="Phosphoglycerate mutase-like"/>
    <property type="match status" value="1"/>
</dbReference>
<dbReference type="HAMAP" id="MF_01039">
    <property type="entry name" value="PGAM_GpmA"/>
    <property type="match status" value="1"/>
</dbReference>
<dbReference type="InterPro" id="IPR013078">
    <property type="entry name" value="His_Pase_superF_clade-1"/>
</dbReference>
<dbReference type="InterPro" id="IPR029033">
    <property type="entry name" value="His_PPase_superfam"/>
</dbReference>
<dbReference type="InterPro" id="IPR001345">
    <property type="entry name" value="PG/BPGM_mutase_AS"/>
</dbReference>
<dbReference type="InterPro" id="IPR005952">
    <property type="entry name" value="Phosphogly_mut1"/>
</dbReference>
<dbReference type="NCBIfam" id="TIGR01258">
    <property type="entry name" value="pgm_1"/>
    <property type="match status" value="1"/>
</dbReference>
<dbReference type="NCBIfam" id="NF010713">
    <property type="entry name" value="PRK14115.1"/>
    <property type="match status" value="1"/>
</dbReference>
<dbReference type="PANTHER" id="PTHR11931">
    <property type="entry name" value="PHOSPHOGLYCERATE MUTASE"/>
    <property type="match status" value="1"/>
</dbReference>
<dbReference type="Pfam" id="PF00300">
    <property type="entry name" value="His_Phos_1"/>
    <property type="match status" value="1"/>
</dbReference>
<dbReference type="PIRSF" id="PIRSF000709">
    <property type="entry name" value="6PFK_2-Ptase"/>
    <property type="match status" value="1"/>
</dbReference>
<dbReference type="SMART" id="SM00855">
    <property type="entry name" value="PGAM"/>
    <property type="match status" value="1"/>
</dbReference>
<dbReference type="SUPFAM" id="SSF53254">
    <property type="entry name" value="Phosphoglycerate mutase-like"/>
    <property type="match status" value="1"/>
</dbReference>
<dbReference type="PROSITE" id="PS00175">
    <property type="entry name" value="PG_MUTASE"/>
    <property type="match status" value="1"/>
</dbReference>
<organism>
    <name type="scientific">Borrelia hermsii (strain HS1 / DAH)</name>
    <dbReference type="NCBI Taxonomy" id="314723"/>
    <lineage>
        <taxon>Bacteria</taxon>
        <taxon>Pseudomonadati</taxon>
        <taxon>Spirochaetota</taxon>
        <taxon>Spirochaetia</taxon>
        <taxon>Spirochaetales</taxon>
        <taxon>Borreliaceae</taxon>
        <taxon>Borrelia</taxon>
    </lineage>
</organism>
<evidence type="ECO:0000255" key="1">
    <source>
        <dbReference type="HAMAP-Rule" id="MF_01039"/>
    </source>
</evidence>
<name>GPMA_BORHD</name>
<protein>
    <recommendedName>
        <fullName evidence="1">2,3-bisphosphoglycerate-dependent phosphoglycerate mutase</fullName>
        <shortName evidence="1">BPG-dependent PGAM</shortName>
        <shortName evidence="1">PGAM</shortName>
        <shortName evidence="1">Phosphoglyceromutase</shortName>
        <shortName evidence="1">dPGM</shortName>
        <ecNumber evidence="1">5.4.2.11</ecNumber>
    </recommendedName>
</protein>
<sequence>MYKLVLVRHGESEWNRENLFTGWTDVKLSEKGISEALEGGRVLKQNGYSFDIAFSSMLVRANDTLNIILRELGQSYIDVEKSWRLNERHYGALQGLNKAETAEKYGEDQVLMWRRSYDIPPMPLEESDKRHPIHDLRYKGIPKSELPSTECLKDTVARVIPYWTDKIAKAIIEGKRVIIAAHGNSLRALVKYLDNMSDDDILKLNIPTGIPLVYELDQDLRPIKHYYLGDEDKIKAAMESVANQGKKK</sequence>
<accession>B2S101</accession>